<organismHost>
    <name type="scientific">Ictaluridae</name>
    <name type="common">bullhead catfishes</name>
    <dbReference type="NCBI Taxonomy" id="7996"/>
</organismHost>
<dbReference type="EMBL" id="M75136">
    <property type="protein sequence ID" value="AAA88123.1"/>
    <property type="molecule type" value="Genomic_DNA"/>
</dbReference>
<dbReference type="PIR" id="C36788">
    <property type="entry name" value="C36788"/>
</dbReference>
<dbReference type="RefSeq" id="NP_041111.1">
    <property type="nucleotide sequence ID" value="NC_001493.2"/>
</dbReference>
<dbReference type="GeneID" id="1488409"/>
<dbReference type="KEGG" id="vg:1488409"/>
<dbReference type="Proteomes" id="UP000007643">
    <property type="component" value="Segment"/>
</dbReference>
<protein>
    <recommendedName>
        <fullName>Uncharacterized protein ORF20</fullName>
    </recommendedName>
</protein>
<reference key="1">
    <citation type="journal article" date="1992" name="Virology">
        <title>Channel catfish virus: a new type of herpesvirus.</title>
        <authorList>
            <person name="Davison A.J."/>
        </authorList>
    </citation>
    <scope>NUCLEOTIDE SEQUENCE [LARGE SCALE GENOMIC DNA]</scope>
</reference>
<sequence length="102" mass="11992">MASSDRFPLFCCVRNCIFRVSVDRVQPFIAHLRDHFGEKPGTSIRFRCPRCETILWRFPLGETVPDEMNIRRAWNHVALIQNECRSPETQIMCIHFLVDPES</sequence>
<gene>
    <name type="primary">ORF20</name>
</gene>
<feature type="chain" id="PRO_0000222103" description="Uncharacterized protein ORF20">
    <location>
        <begin position="1"/>
        <end position="102"/>
    </location>
</feature>
<proteinExistence type="predicted"/>
<name>VG20_ICHVA</name>
<keyword id="KW-1185">Reference proteome</keyword>
<accession>Q00142</accession>
<organism>
    <name type="scientific">Ictalurid herpesvirus 1 (strain Auburn)</name>
    <name type="common">IcHV-1</name>
    <name type="synonym">Channel catfish herpesvirus</name>
    <dbReference type="NCBI Taxonomy" id="766178"/>
    <lineage>
        <taxon>Viruses</taxon>
        <taxon>Duplodnaviria</taxon>
        <taxon>Heunggongvirae</taxon>
        <taxon>Peploviricota</taxon>
        <taxon>Herviviricetes</taxon>
        <taxon>Herpesvirales</taxon>
        <taxon>Alloherpesviridae</taxon>
        <taxon>Ictavirus</taxon>
        <taxon>Ictavirus ictaluridallo1</taxon>
        <taxon>Ictalurid herpesvirus 1</taxon>
    </lineage>
</organism>